<proteinExistence type="inferred from homology"/>
<comment type="function">
    <text evidence="1">Peptidoglycan polymerase that catalyzes glycan chain elongation from lipid-linked precursors.</text>
</comment>
<comment type="catalytic activity">
    <reaction evidence="1">
        <text>[GlcNAc-(1-&gt;4)-Mur2Ac(oyl-L-Ala-gamma-D-Glu-L-Lys-D-Ala-D-Ala)](n)-di-trans,octa-cis-undecaprenyl diphosphate + beta-D-GlcNAc-(1-&gt;4)-Mur2Ac(oyl-L-Ala-gamma-D-Glu-L-Lys-D-Ala-D-Ala)-di-trans,octa-cis-undecaprenyl diphosphate = [GlcNAc-(1-&gt;4)-Mur2Ac(oyl-L-Ala-gamma-D-Glu-L-Lys-D-Ala-D-Ala)](n+1)-di-trans,octa-cis-undecaprenyl diphosphate + di-trans,octa-cis-undecaprenyl diphosphate + H(+)</text>
        <dbReference type="Rhea" id="RHEA:23708"/>
        <dbReference type="Rhea" id="RHEA-COMP:9602"/>
        <dbReference type="Rhea" id="RHEA-COMP:9603"/>
        <dbReference type="ChEBI" id="CHEBI:15378"/>
        <dbReference type="ChEBI" id="CHEBI:58405"/>
        <dbReference type="ChEBI" id="CHEBI:60033"/>
        <dbReference type="ChEBI" id="CHEBI:78435"/>
        <dbReference type="EC" id="2.4.99.28"/>
    </reaction>
</comment>
<comment type="pathway">
    <text evidence="1">Cell wall biogenesis; peptidoglycan biosynthesis.</text>
</comment>
<comment type="subcellular location">
    <subcellularLocation>
        <location evidence="1">Cell inner membrane</location>
        <topology evidence="1">Single-pass membrane protein</topology>
    </subcellularLocation>
</comment>
<comment type="similarity">
    <text evidence="1">Belongs to the glycosyltransferase 51 family.</text>
</comment>
<protein>
    <recommendedName>
        <fullName evidence="1">Biosynthetic peptidoglycan transglycosylase</fullName>
        <ecNumber evidence="1">2.4.99.28</ecNumber>
    </recommendedName>
    <alternativeName>
        <fullName evidence="1">Glycan polymerase</fullName>
    </alternativeName>
    <alternativeName>
        <fullName evidence="1">Peptidoglycan glycosyltransferase MtgA</fullName>
        <shortName evidence="1">PGT</shortName>
    </alternativeName>
</protein>
<gene>
    <name evidence="1" type="primary">mtgA</name>
    <name type="ordered locus">EC55989_3626</name>
</gene>
<name>MTGA_ECO55</name>
<dbReference type="EC" id="2.4.99.28" evidence="1"/>
<dbReference type="EMBL" id="CU928145">
    <property type="protein sequence ID" value="CAU99863.1"/>
    <property type="molecule type" value="Genomic_DNA"/>
</dbReference>
<dbReference type="RefSeq" id="WP_000047103.1">
    <property type="nucleotide sequence ID" value="NC_011748.1"/>
</dbReference>
<dbReference type="SMR" id="B7LHS1"/>
<dbReference type="CAZy" id="GT51">
    <property type="family name" value="Glycosyltransferase Family 51"/>
</dbReference>
<dbReference type="KEGG" id="eck:EC55989_3626"/>
<dbReference type="HOGENOM" id="CLU_006354_1_1_6"/>
<dbReference type="UniPathway" id="UPA00219"/>
<dbReference type="Proteomes" id="UP000000746">
    <property type="component" value="Chromosome"/>
</dbReference>
<dbReference type="GO" id="GO:0009274">
    <property type="term" value="C:peptidoglycan-based cell wall"/>
    <property type="evidence" value="ECO:0007669"/>
    <property type="project" value="InterPro"/>
</dbReference>
<dbReference type="GO" id="GO:0005886">
    <property type="term" value="C:plasma membrane"/>
    <property type="evidence" value="ECO:0007669"/>
    <property type="project" value="UniProtKB-SubCell"/>
</dbReference>
<dbReference type="GO" id="GO:0016763">
    <property type="term" value="F:pentosyltransferase activity"/>
    <property type="evidence" value="ECO:0007669"/>
    <property type="project" value="InterPro"/>
</dbReference>
<dbReference type="GO" id="GO:0008955">
    <property type="term" value="F:peptidoglycan glycosyltransferase activity"/>
    <property type="evidence" value="ECO:0007669"/>
    <property type="project" value="UniProtKB-UniRule"/>
</dbReference>
<dbReference type="GO" id="GO:0071555">
    <property type="term" value="P:cell wall organization"/>
    <property type="evidence" value="ECO:0007669"/>
    <property type="project" value="UniProtKB-KW"/>
</dbReference>
<dbReference type="GO" id="GO:0009252">
    <property type="term" value="P:peptidoglycan biosynthetic process"/>
    <property type="evidence" value="ECO:0007669"/>
    <property type="project" value="UniProtKB-UniRule"/>
</dbReference>
<dbReference type="GO" id="GO:0008360">
    <property type="term" value="P:regulation of cell shape"/>
    <property type="evidence" value="ECO:0007669"/>
    <property type="project" value="UniProtKB-KW"/>
</dbReference>
<dbReference type="FunFam" id="1.10.3810.10:FF:000004">
    <property type="entry name" value="Biosynthetic peptidoglycan transglycosylase"/>
    <property type="match status" value="1"/>
</dbReference>
<dbReference type="Gene3D" id="1.10.3810.10">
    <property type="entry name" value="Biosynthetic peptidoglycan transglycosylase-like"/>
    <property type="match status" value="1"/>
</dbReference>
<dbReference type="HAMAP" id="MF_00766">
    <property type="entry name" value="PGT_MtgA"/>
    <property type="match status" value="1"/>
</dbReference>
<dbReference type="InterPro" id="IPR001264">
    <property type="entry name" value="Glyco_trans_51"/>
</dbReference>
<dbReference type="InterPro" id="IPR023346">
    <property type="entry name" value="Lysozyme-like_dom_sf"/>
</dbReference>
<dbReference type="InterPro" id="IPR036950">
    <property type="entry name" value="PBP_transglycosylase"/>
</dbReference>
<dbReference type="InterPro" id="IPR011812">
    <property type="entry name" value="Pep_trsgly"/>
</dbReference>
<dbReference type="NCBIfam" id="TIGR02070">
    <property type="entry name" value="mono_pep_trsgly"/>
    <property type="match status" value="1"/>
</dbReference>
<dbReference type="PANTHER" id="PTHR30400:SF0">
    <property type="entry name" value="BIOSYNTHETIC PEPTIDOGLYCAN TRANSGLYCOSYLASE"/>
    <property type="match status" value="1"/>
</dbReference>
<dbReference type="PANTHER" id="PTHR30400">
    <property type="entry name" value="MONOFUNCTIONAL BIOSYNTHETIC PEPTIDOGLYCAN TRANSGLYCOSYLASE"/>
    <property type="match status" value="1"/>
</dbReference>
<dbReference type="Pfam" id="PF00912">
    <property type="entry name" value="Transgly"/>
    <property type="match status" value="1"/>
</dbReference>
<dbReference type="SUPFAM" id="SSF53955">
    <property type="entry name" value="Lysozyme-like"/>
    <property type="match status" value="1"/>
</dbReference>
<keyword id="KW-0997">Cell inner membrane</keyword>
<keyword id="KW-1003">Cell membrane</keyword>
<keyword id="KW-0133">Cell shape</keyword>
<keyword id="KW-0961">Cell wall biogenesis/degradation</keyword>
<keyword id="KW-0328">Glycosyltransferase</keyword>
<keyword id="KW-0472">Membrane</keyword>
<keyword id="KW-0573">Peptidoglycan synthesis</keyword>
<keyword id="KW-1185">Reference proteome</keyword>
<keyword id="KW-0808">Transferase</keyword>
<keyword id="KW-0812">Transmembrane</keyword>
<keyword id="KW-1133">Transmembrane helix</keyword>
<reference key="1">
    <citation type="journal article" date="2009" name="PLoS Genet.">
        <title>Organised genome dynamics in the Escherichia coli species results in highly diverse adaptive paths.</title>
        <authorList>
            <person name="Touchon M."/>
            <person name="Hoede C."/>
            <person name="Tenaillon O."/>
            <person name="Barbe V."/>
            <person name="Baeriswyl S."/>
            <person name="Bidet P."/>
            <person name="Bingen E."/>
            <person name="Bonacorsi S."/>
            <person name="Bouchier C."/>
            <person name="Bouvet O."/>
            <person name="Calteau A."/>
            <person name="Chiapello H."/>
            <person name="Clermont O."/>
            <person name="Cruveiller S."/>
            <person name="Danchin A."/>
            <person name="Diard M."/>
            <person name="Dossat C."/>
            <person name="Karoui M.E."/>
            <person name="Frapy E."/>
            <person name="Garry L."/>
            <person name="Ghigo J.M."/>
            <person name="Gilles A.M."/>
            <person name="Johnson J."/>
            <person name="Le Bouguenec C."/>
            <person name="Lescat M."/>
            <person name="Mangenot S."/>
            <person name="Martinez-Jehanne V."/>
            <person name="Matic I."/>
            <person name="Nassif X."/>
            <person name="Oztas S."/>
            <person name="Petit M.A."/>
            <person name="Pichon C."/>
            <person name="Rouy Z."/>
            <person name="Ruf C.S."/>
            <person name="Schneider D."/>
            <person name="Tourret J."/>
            <person name="Vacherie B."/>
            <person name="Vallenet D."/>
            <person name="Medigue C."/>
            <person name="Rocha E.P.C."/>
            <person name="Denamur E."/>
        </authorList>
    </citation>
    <scope>NUCLEOTIDE SEQUENCE [LARGE SCALE GENOMIC DNA]</scope>
    <source>
        <strain>55989 / EAEC</strain>
    </source>
</reference>
<feature type="chain" id="PRO_1000148434" description="Biosynthetic peptidoglycan transglycosylase">
    <location>
        <begin position="1"/>
        <end position="242"/>
    </location>
</feature>
<feature type="transmembrane region" description="Helical" evidence="1">
    <location>
        <begin position="19"/>
        <end position="39"/>
    </location>
</feature>
<accession>B7LHS1</accession>
<sequence>MSKSRLTVFSFVRRFLLRLMVVLAVFWGGGIALFSVAPVPFSAVMVERQVSAWLYGNFRYVAHSDWVSMDQISPWMGLAVIAAEDQKFPEHWGFDVASIEKALAHNERNENRIRGASTISQQTAKNLFLWDGRSWVRKGLEAGLTLGIETVWSKKRILTVYLNIAEFGDGVFGVEAAAQRYFHKPASKLTRSEAALLAAVLPNPLRFKVSSPSGYVRSRQAWILRQMYQLGGEPFMQQHQLD</sequence>
<organism>
    <name type="scientific">Escherichia coli (strain 55989 / EAEC)</name>
    <dbReference type="NCBI Taxonomy" id="585055"/>
    <lineage>
        <taxon>Bacteria</taxon>
        <taxon>Pseudomonadati</taxon>
        <taxon>Pseudomonadota</taxon>
        <taxon>Gammaproteobacteria</taxon>
        <taxon>Enterobacterales</taxon>
        <taxon>Enterobacteriaceae</taxon>
        <taxon>Escherichia</taxon>
    </lineage>
</organism>
<evidence type="ECO:0000255" key="1">
    <source>
        <dbReference type="HAMAP-Rule" id="MF_00766"/>
    </source>
</evidence>